<dbReference type="EC" id="2.1.1.182" evidence="1"/>
<dbReference type="EMBL" id="CP000548">
    <property type="protein sequence ID" value="ABO06885.1"/>
    <property type="molecule type" value="Genomic_DNA"/>
</dbReference>
<dbReference type="RefSeq" id="WP_004189099.1">
    <property type="nucleotide sequence ID" value="NZ_CP007802.1"/>
</dbReference>
<dbReference type="SMR" id="A3MNW4"/>
<dbReference type="GeneID" id="92977989"/>
<dbReference type="KEGG" id="bmaz:BM44_868"/>
<dbReference type="KEGG" id="bmn:BMA10247_2424"/>
<dbReference type="PATRIC" id="fig|320389.8.peg.966"/>
<dbReference type="GO" id="GO:0005829">
    <property type="term" value="C:cytosol"/>
    <property type="evidence" value="ECO:0007669"/>
    <property type="project" value="TreeGrafter"/>
</dbReference>
<dbReference type="GO" id="GO:0052908">
    <property type="term" value="F:16S rRNA (adenine(1518)-N(6)/adenine(1519)-N(6))-dimethyltransferase activity"/>
    <property type="evidence" value="ECO:0007669"/>
    <property type="project" value="UniProtKB-EC"/>
</dbReference>
<dbReference type="GO" id="GO:0003723">
    <property type="term" value="F:RNA binding"/>
    <property type="evidence" value="ECO:0007669"/>
    <property type="project" value="UniProtKB-KW"/>
</dbReference>
<dbReference type="FunFam" id="1.10.8.100:FF:000001">
    <property type="entry name" value="Ribosomal RNA small subunit methyltransferase A"/>
    <property type="match status" value="1"/>
</dbReference>
<dbReference type="Gene3D" id="1.10.8.100">
    <property type="entry name" value="Ribosomal RNA adenine dimethylase-like, domain 2"/>
    <property type="match status" value="1"/>
</dbReference>
<dbReference type="Gene3D" id="3.40.50.150">
    <property type="entry name" value="Vaccinia Virus protein VP39"/>
    <property type="match status" value="1"/>
</dbReference>
<dbReference type="HAMAP" id="MF_00607">
    <property type="entry name" value="16SrRNA_methyltr_A"/>
    <property type="match status" value="1"/>
</dbReference>
<dbReference type="InterPro" id="IPR001737">
    <property type="entry name" value="KsgA/Erm"/>
</dbReference>
<dbReference type="InterPro" id="IPR023165">
    <property type="entry name" value="rRNA_Ade_diMease-like_C"/>
</dbReference>
<dbReference type="InterPro" id="IPR020598">
    <property type="entry name" value="rRNA_Ade_methylase_Trfase_N"/>
</dbReference>
<dbReference type="InterPro" id="IPR011530">
    <property type="entry name" value="rRNA_adenine_dimethylase"/>
</dbReference>
<dbReference type="InterPro" id="IPR029063">
    <property type="entry name" value="SAM-dependent_MTases_sf"/>
</dbReference>
<dbReference type="NCBIfam" id="TIGR00755">
    <property type="entry name" value="ksgA"/>
    <property type="match status" value="1"/>
</dbReference>
<dbReference type="PANTHER" id="PTHR11727">
    <property type="entry name" value="DIMETHYLADENOSINE TRANSFERASE"/>
    <property type="match status" value="1"/>
</dbReference>
<dbReference type="PANTHER" id="PTHR11727:SF7">
    <property type="entry name" value="DIMETHYLADENOSINE TRANSFERASE-RELATED"/>
    <property type="match status" value="1"/>
</dbReference>
<dbReference type="Pfam" id="PF00398">
    <property type="entry name" value="RrnaAD"/>
    <property type="match status" value="1"/>
</dbReference>
<dbReference type="SMART" id="SM00650">
    <property type="entry name" value="rADc"/>
    <property type="match status" value="1"/>
</dbReference>
<dbReference type="SUPFAM" id="SSF53335">
    <property type="entry name" value="S-adenosyl-L-methionine-dependent methyltransferases"/>
    <property type="match status" value="1"/>
</dbReference>
<dbReference type="PROSITE" id="PS51689">
    <property type="entry name" value="SAM_RNA_A_N6_MT"/>
    <property type="match status" value="1"/>
</dbReference>
<evidence type="ECO:0000255" key="1">
    <source>
        <dbReference type="HAMAP-Rule" id="MF_00607"/>
    </source>
</evidence>
<reference key="1">
    <citation type="journal article" date="2010" name="Genome Biol. Evol.">
        <title>Continuing evolution of Burkholderia mallei through genome reduction and large-scale rearrangements.</title>
        <authorList>
            <person name="Losada L."/>
            <person name="Ronning C.M."/>
            <person name="DeShazer D."/>
            <person name="Woods D."/>
            <person name="Fedorova N."/>
            <person name="Kim H.S."/>
            <person name="Shabalina S.A."/>
            <person name="Pearson T.R."/>
            <person name="Brinkac L."/>
            <person name="Tan P."/>
            <person name="Nandi T."/>
            <person name="Crabtree J."/>
            <person name="Badger J."/>
            <person name="Beckstrom-Sternberg S."/>
            <person name="Saqib M."/>
            <person name="Schutzer S.E."/>
            <person name="Keim P."/>
            <person name="Nierman W.C."/>
        </authorList>
    </citation>
    <scope>NUCLEOTIDE SEQUENCE [LARGE SCALE GENOMIC DNA]</scope>
    <source>
        <strain>NCTC 10247</strain>
    </source>
</reference>
<name>RSMA_BURM7</name>
<gene>
    <name evidence="1" type="primary">rsmA</name>
    <name evidence="1" type="synonym">ksgA</name>
    <name type="ordered locus">BMA10247_2424</name>
</gene>
<protein>
    <recommendedName>
        <fullName evidence="1">Ribosomal RNA small subunit methyltransferase A</fullName>
        <ecNumber evidence="1">2.1.1.182</ecNumber>
    </recommendedName>
    <alternativeName>
        <fullName evidence="1">16S rRNA (adenine(1518)-N(6)/adenine(1519)-N(6))-dimethyltransferase</fullName>
    </alternativeName>
    <alternativeName>
        <fullName evidence="1">16S rRNA dimethyladenosine transferase</fullName>
    </alternativeName>
    <alternativeName>
        <fullName evidence="1">16S rRNA dimethylase</fullName>
    </alternativeName>
    <alternativeName>
        <fullName evidence="1">S-adenosylmethionine-6-N', N'-adenosyl(rRNA) dimethyltransferase</fullName>
    </alternativeName>
</protein>
<proteinExistence type="inferred from homology"/>
<keyword id="KW-0963">Cytoplasm</keyword>
<keyword id="KW-0489">Methyltransferase</keyword>
<keyword id="KW-0694">RNA-binding</keyword>
<keyword id="KW-0698">rRNA processing</keyword>
<keyword id="KW-0949">S-adenosyl-L-methionine</keyword>
<keyword id="KW-0808">Transferase</keyword>
<feature type="chain" id="PRO_1000056604" description="Ribosomal RNA small subunit methyltransferase A">
    <location>
        <begin position="1"/>
        <end position="275"/>
    </location>
</feature>
<feature type="binding site" evidence="1">
    <location>
        <position position="19"/>
    </location>
    <ligand>
        <name>S-adenosyl-L-methionine</name>
        <dbReference type="ChEBI" id="CHEBI:59789"/>
    </ligand>
</feature>
<feature type="binding site" evidence="1">
    <location>
        <position position="21"/>
    </location>
    <ligand>
        <name>S-adenosyl-L-methionine</name>
        <dbReference type="ChEBI" id="CHEBI:59789"/>
    </ligand>
</feature>
<feature type="binding site" evidence="1">
    <location>
        <position position="46"/>
    </location>
    <ligand>
        <name>S-adenosyl-L-methionine</name>
        <dbReference type="ChEBI" id="CHEBI:59789"/>
    </ligand>
</feature>
<feature type="binding site" evidence="1">
    <location>
        <position position="71"/>
    </location>
    <ligand>
        <name>S-adenosyl-L-methionine</name>
        <dbReference type="ChEBI" id="CHEBI:59789"/>
    </ligand>
</feature>
<feature type="binding site" evidence="1">
    <location>
        <position position="94"/>
    </location>
    <ligand>
        <name>S-adenosyl-L-methionine</name>
        <dbReference type="ChEBI" id="CHEBI:59789"/>
    </ligand>
</feature>
<feature type="binding site" evidence="1">
    <location>
        <position position="117"/>
    </location>
    <ligand>
        <name>S-adenosyl-L-methionine</name>
        <dbReference type="ChEBI" id="CHEBI:59789"/>
    </ligand>
</feature>
<comment type="function">
    <text evidence="1">Specifically dimethylates two adjacent adenosines (A1518 and A1519) in the loop of a conserved hairpin near the 3'-end of 16S rRNA in the 30S particle. May play a critical role in biogenesis of 30S subunits.</text>
</comment>
<comment type="catalytic activity">
    <reaction evidence="1">
        <text>adenosine(1518)/adenosine(1519) in 16S rRNA + 4 S-adenosyl-L-methionine = N(6)-dimethyladenosine(1518)/N(6)-dimethyladenosine(1519) in 16S rRNA + 4 S-adenosyl-L-homocysteine + 4 H(+)</text>
        <dbReference type="Rhea" id="RHEA:19609"/>
        <dbReference type="Rhea" id="RHEA-COMP:10232"/>
        <dbReference type="Rhea" id="RHEA-COMP:10233"/>
        <dbReference type="ChEBI" id="CHEBI:15378"/>
        <dbReference type="ChEBI" id="CHEBI:57856"/>
        <dbReference type="ChEBI" id="CHEBI:59789"/>
        <dbReference type="ChEBI" id="CHEBI:74411"/>
        <dbReference type="ChEBI" id="CHEBI:74493"/>
        <dbReference type="EC" id="2.1.1.182"/>
    </reaction>
</comment>
<comment type="subcellular location">
    <subcellularLocation>
        <location evidence="1">Cytoplasm</location>
    </subcellularLocation>
</comment>
<comment type="similarity">
    <text evidence="1">Belongs to the class I-like SAM-binding methyltransferase superfamily. rRNA adenine N(6)-methyltransferase family. RsmA subfamily.</text>
</comment>
<sequence>MSNSRQHQGHFARKRFGQNFLVDHGVIDAIVAAIRPERGERMVEIGPGLGALTGPVIARLATPGSPLHAVELDRDLIGRLEQRFGELLELHAGDALTFDFGSIARPGDEPSLRIIGNLPYNISSPLLFHLMSFAPVVIDQHFMLQNEVVERMVAEPGTKAFSRLSVMLQYRYVMDKLIDVPPESFQPPPKVDSAIVRMIPHAPHELPAVDPAVLGEVVTAAFSQRRKMLRNTLGGYRDLVDFDALGFDLARRAEDIGVDEYVRVAQAVASARASG</sequence>
<organism>
    <name type="scientific">Burkholderia mallei (strain NCTC 10247)</name>
    <dbReference type="NCBI Taxonomy" id="320389"/>
    <lineage>
        <taxon>Bacteria</taxon>
        <taxon>Pseudomonadati</taxon>
        <taxon>Pseudomonadota</taxon>
        <taxon>Betaproteobacteria</taxon>
        <taxon>Burkholderiales</taxon>
        <taxon>Burkholderiaceae</taxon>
        <taxon>Burkholderia</taxon>
        <taxon>pseudomallei group</taxon>
    </lineage>
</organism>
<accession>A3MNW4</accession>